<reference key="1">
    <citation type="journal article" date="2009" name="Appl. Environ. Microbiol.">
        <title>Three genomes from the phylum Acidobacteria provide insight into the lifestyles of these microorganisms in soils.</title>
        <authorList>
            <person name="Ward N.L."/>
            <person name="Challacombe J.F."/>
            <person name="Janssen P.H."/>
            <person name="Henrissat B."/>
            <person name="Coutinho P.M."/>
            <person name="Wu M."/>
            <person name="Xie G."/>
            <person name="Haft D.H."/>
            <person name="Sait M."/>
            <person name="Badger J."/>
            <person name="Barabote R.D."/>
            <person name="Bradley B."/>
            <person name="Brettin T.S."/>
            <person name="Brinkac L.M."/>
            <person name="Bruce D."/>
            <person name="Creasy T."/>
            <person name="Daugherty S.C."/>
            <person name="Davidsen T.M."/>
            <person name="DeBoy R.T."/>
            <person name="Detter J.C."/>
            <person name="Dodson R.J."/>
            <person name="Durkin A.S."/>
            <person name="Ganapathy A."/>
            <person name="Gwinn-Giglio M."/>
            <person name="Han C.S."/>
            <person name="Khouri H."/>
            <person name="Kiss H."/>
            <person name="Kothari S.P."/>
            <person name="Madupu R."/>
            <person name="Nelson K.E."/>
            <person name="Nelson W.C."/>
            <person name="Paulsen I."/>
            <person name="Penn K."/>
            <person name="Ren Q."/>
            <person name="Rosovitz M.J."/>
            <person name="Selengut J.D."/>
            <person name="Shrivastava S."/>
            <person name="Sullivan S.A."/>
            <person name="Tapia R."/>
            <person name="Thompson L.S."/>
            <person name="Watkins K.L."/>
            <person name="Yang Q."/>
            <person name="Yu C."/>
            <person name="Zafar N."/>
            <person name="Zhou L."/>
            <person name="Kuske C.R."/>
        </authorList>
    </citation>
    <scope>NUCLEOTIDE SEQUENCE [LARGE SCALE GENOMIC DNA]</scope>
    <source>
        <strain>Ellin345</strain>
    </source>
</reference>
<organism>
    <name type="scientific">Koribacter versatilis (strain Ellin345)</name>
    <dbReference type="NCBI Taxonomy" id="204669"/>
    <lineage>
        <taxon>Bacteria</taxon>
        <taxon>Pseudomonadati</taxon>
        <taxon>Acidobacteriota</taxon>
        <taxon>Terriglobia</taxon>
        <taxon>Terriglobales</taxon>
        <taxon>Candidatus Korobacteraceae</taxon>
        <taxon>Candidatus Korobacter</taxon>
    </lineage>
</organism>
<protein>
    <recommendedName>
        <fullName evidence="1">Large ribosomal subunit protein bL12</fullName>
    </recommendedName>
    <alternativeName>
        <fullName evidence="2">50S ribosomal protein L7/L12</fullName>
    </alternativeName>
</protein>
<proteinExistence type="inferred from homology"/>
<comment type="function">
    <text evidence="1">Forms part of the ribosomal stalk which helps the ribosome interact with GTP-bound translation factors. Is thus essential for accurate translation.</text>
</comment>
<comment type="subunit">
    <text evidence="1">Homodimer. Part of the ribosomal stalk of the 50S ribosomal subunit. Forms a multimeric L10(L12)X complex, where L10 forms an elongated spine to which 2 to 4 L12 dimers bind in a sequential fashion. Binds GTP-bound translation factors.</text>
</comment>
<comment type="similarity">
    <text evidence="1">Belongs to the bacterial ribosomal protein bL12 family.</text>
</comment>
<name>RL7_KORVE</name>
<feature type="chain" id="PRO_1000072109" description="Large ribosomal subunit protein bL12">
    <location>
        <begin position="1"/>
        <end position="126"/>
    </location>
</feature>
<keyword id="KW-1185">Reference proteome</keyword>
<keyword id="KW-0687">Ribonucleoprotein</keyword>
<keyword id="KW-0689">Ribosomal protein</keyword>
<dbReference type="EMBL" id="CP000360">
    <property type="protein sequence ID" value="ABF43677.1"/>
    <property type="molecule type" value="Genomic_DNA"/>
</dbReference>
<dbReference type="RefSeq" id="WP_011525474.1">
    <property type="nucleotide sequence ID" value="NC_008009.1"/>
</dbReference>
<dbReference type="SMR" id="Q1IHH3"/>
<dbReference type="STRING" id="204669.Acid345_4677"/>
<dbReference type="EnsemblBacteria" id="ABF43677">
    <property type="protein sequence ID" value="ABF43677"/>
    <property type="gene ID" value="Acid345_4677"/>
</dbReference>
<dbReference type="KEGG" id="aba:Acid345_4677"/>
<dbReference type="eggNOG" id="COG0222">
    <property type="taxonomic scope" value="Bacteria"/>
</dbReference>
<dbReference type="HOGENOM" id="CLU_086499_3_2_0"/>
<dbReference type="OrthoDB" id="9811748at2"/>
<dbReference type="Proteomes" id="UP000002432">
    <property type="component" value="Chromosome"/>
</dbReference>
<dbReference type="GO" id="GO:0005737">
    <property type="term" value="C:cytoplasm"/>
    <property type="evidence" value="ECO:0007669"/>
    <property type="project" value="UniProtKB-ARBA"/>
</dbReference>
<dbReference type="GO" id="GO:1990904">
    <property type="term" value="C:ribonucleoprotein complex"/>
    <property type="evidence" value="ECO:0007669"/>
    <property type="project" value="UniProtKB-KW"/>
</dbReference>
<dbReference type="GO" id="GO:0005840">
    <property type="term" value="C:ribosome"/>
    <property type="evidence" value="ECO:0007669"/>
    <property type="project" value="UniProtKB-KW"/>
</dbReference>
<dbReference type="GO" id="GO:0003729">
    <property type="term" value="F:mRNA binding"/>
    <property type="evidence" value="ECO:0007669"/>
    <property type="project" value="TreeGrafter"/>
</dbReference>
<dbReference type="GO" id="GO:0003735">
    <property type="term" value="F:structural constituent of ribosome"/>
    <property type="evidence" value="ECO:0007669"/>
    <property type="project" value="InterPro"/>
</dbReference>
<dbReference type="GO" id="GO:0006412">
    <property type="term" value="P:translation"/>
    <property type="evidence" value="ECO:0007669"/>
    <property type="project" value="UniProtKB-UniRule"/>
</dbReference>
<dbReference type="CDD" id="cd00387">
    <property type="entry name" value="Ribosomal_L7_L12"/>
    <property type="match status" value="1"/>
</dbReference>
<dbReference type="FunFam" id="3.30.1390.10:FF:000001">
    <property type="entry name" value="50S ribosomal protein L7/L12"/>
    <property type="match status" value="1"/>
</dbReference>
<dbReference type="Gene3D" id="3.30.1390.10">
    <property type="match status" value="1"/>
</dbReference>
<dbReference type="Gene3D" id="1.20.5.710">
    <property type="entry name" value="Single helix bin"/>
    <property type="match status" value="1"/>
</dbReference>
<dbReference type="HAMAP" id="MF_00368">
    <property type="entry name" value="Ribosomal_bL12"/>
    <property type="match status" value="1"/>
</dbReference>
<dbReference type="InterPro" id="IPR000206">
    <property type="entry name" value="Ribosomal_bL12"/>
</dbReference>
<dbReference type="InterPro" id="IPR013823">
    <property type="entry name" value="Ribosomal_bL12_C"/>
</dbReference>
<dbReference type="InterPro" id="IPR014719">
    <property type="entry name" value="Ribosomal_bL12_C/ClpS-like"/>
</dbReference>
<dbReference type="InterPro" id="IPR008932">
    <property type="entry name" value="Ribosomal_bL12_oligo"/>
</dbReference>
<dbReference type="InterPro" id="IPR036235">
    <property type="entry name" value="Ribosomal_bL12_oligo_N_sf"/>
</dbReference>
<dbReference type="NCBIfam" id="TIGR00855">
    <property type="entry name" value="L12"/>
    <property type="match status" value="1"/>
</dbReference>
<dbReference type="PANTHER" id="PTHR45987">
    <property type="entry name" value="39S RIBOSOMAL PROTEIN L12"/>
    <property type="match status" value="1"/>
</dbReference>
<dbReference type="PANTHER" id="PTHR45987:SF4">
    <property type="entry name" value="LARGE RIBOSOMAL SUBUNIT PROTEIN BL12M"/>
    <property type="match status" value="1"/>
</dbReference>
<dbReference type="Pfam" id="PF00542">
    <property type="entry name" value="Ribosomal_L12"/>
    <property type="match status" value="1"/>
</dbReference>
<dbReference type="Pfam" id="PF16320">
    <property type="entry name" value="Ribosomal_L12_N"/>
    <property type="match status" value="1"/>
</dbReference>
<dbReference type="SUPFAM" id="SSF54736">
    <property type="entry name" value="ClpS-like"/>
    <property type="match status" value="1"/>
</dbReference>
<dbReference type="SUPFAM" id="SSF48300">
    <property type="entry name" value="Ribosomal protein L7/12, oligomerisation (N-terminal) domain"/>
    <property type="match status" value="1"/>
</dbReference>
<accession>Q1IHH3</accession>
<evidence type="ECO:0000255" key="1">
    <source>
        <dbReference type="HAMAP-Rule" id="MF_00368"/>
    </source>
</evidence>
<evidence type="ECO:0000305" key="2"/>
<gene>
    <name evidence="1" type="primary">rplL</name>
    <name type="ordered locus">Acid345_4677</name>
</gene>
<sequence length="126" mass="12784">MADLAQLEEQIVGLSLLDAAELVKKLESRLGVSAAAAAPVMVAGGGGAAAAAPVEEKTEFTVVLTAAGANKINVIKAVREVTSLGLKEAKDLVDGAPKTVKEGVSKDEAATIQKKFQEAGATVEVK</sequence>